<reference key="1">
    <citation type="submission" date="2003-10" db="EMBL/GenBank/DDBJ databases">
        <title>The complete genome sequence of the alkaliphilic Bacillus clausii KSM-K16.</title>
        <authorList>
            <person name="Takaki Y."/>
            <person name="Kageyama Y."/>
            <person name="Shimamura S."/>
            <person name="Suzuki H."/>
            <person name="Nishi S."/>
            <person name="Hatada Y."/>
            <person name="Kawai S."/>
            <person name="Ito S."/>
            <person name="Horikoshi K."/>
        </authorList>
    </citation>
    <scope>NUCLEOTIDE SEQUENCE [LARGE SCALE GENOMIC DNA]</scope>
    <source>
        <strain>KSM-K16</strain>
    </source>
</reference>
<sequence>MKKRFERIFLIVMDSVGIGEAPDAKEFGDEGANTLGSIAEAFNGLHVPELEKLGLGKIAPLKGVKNVPTPLASYGIMQEASLGKDTMTGHWEIMGLHITKPFQVFPDGFPTELLEQLKSETGRGIIGNKVASGTEILDELGEEHVKTGDLIVYTSADSVLQIAAHEEVVPLEELYDICEKARKLTLAPEYMVGRVIARPFVGEPGKWKRTANRHDYALKPFGRTVMNTLEDAGLASIALGKISDIYDGEGVTKAVRTTSNEDGMDKLAEQINTSFEGLCFLNLVDFDALYGHRRDVIGYGEAIMAFDQRLGEILPQLGDEDLLIVTADHGNDPTHTGTDHTREYVPLLVYNKGIKPVNLGKRRTFADIGATVADNFQVERPSNGTSFLTELKPE</sequence>
<organism>
    <name type="scientific">Shouchella clausii (strain KSM-K16)</name>
    <name type="common">Alkalihalobacillus clausii</name>
    <dbReference type="NCBI Taxonomy" id="66692"/>
    <lineage>
        <taxon>Bacteria</taxon>
        <taxon>Bacillati</taxon>
        <taxon>Bacillota</taxon>
        <taxon>Bacilli</taxon>
        <taxon>Bacillales</taxon>
        <taxon>Bacillaceae</taxon>
        <taxon>Shouchella</taxon>
    </lineage>
</organism>
<comment type="function">
    <text evidence="1">Isomerase that catalyzes the conversion of deoxy-ribose 1-phosphate (dRib-1-P) and ribose 1-phosphate (Rib-1-P) to deoxy-ribose 5-phosphate (dRib-5-P) and ribose 5-phosphate (Rib-5-P), respectively.</text>
</comment>
<comment type="catalytic activity">
    <reaction evidence="1">
        <text>2-deoxy-alpha-D-ribose 1-phosphate = 2-deoxy-D-ribose 5-phosphate</text>
        <dbReference type="Rhea" id="RHEA:27658"/>
        <dbReference type="ChEBI" id="CHEBI:57259"/>
        <dbReference type="ChEBI" id="CHEBI:62877"/>
        <dbReference type="EC" id="5.4.2.7"/>
    </reaction>
</comment>
<comment type="catalytic activity">
    <reaction evidence="1">
        <text>alpha-D-ribose 1-phosphate = D-ribose 5-phosphate</text>
        <dbReference type="Rhea" id="RHEA:18793"/>
        <dbReference type="ChEBI" id="CHEBI:57720"/>
        <dbReference type="ChEBI" id="CHEBI:78346"/>
        <dbReference type="EC" id="5.4.2.7"/>
    </reaction>
</comment>
<comment type="cofactor">
    <cofactor evidence="1">
        <name>Mn(2+)</name>
        <dbReference type="ChEBI" id="CHEBI:29035"/>
    </cofactor>
    <text evidence="1">Binds 2 manganese ions.</text>
</comment>
<comment type="pathway">
    <text evidence="1">Carbohydrate degradation; 2-deoxy-D-ribose 1-phosphate degradation; D-glyceraldehyde 3-phosphate and acetaldehyde from 2-deoxy-alpha-D-ribose 1-phosphate: step 1/2.</text>
</comment>
<comment type="subcellular location">
    <subcellularLocation>
        <location evidence="1">Cytoplasm</location>
    </subcellularLocation>
</comment>
<comment type="similarity">
    <text evidence="1">Belongs to the phosphopentomutase family.</text>
</comment>
<keyword id="KW-0963">Cytoplasm</keyword>
<keyword id="KW-0413">Isomerase</keyword>
<keyword id="KW-0464">Manganese</keyword>
<keyword id="KW-0479">Metal-binding</keyword>
<keyword id="KW-1185">Reference proteome</keyword>
<name>DEOB_SHOC1</name>
<gene>
    <name evidence="1" type="primary">deoB</name>
    <name type="ordered locus">ABC1783</name>
</gene>
<protein>
    <recommendedName>
        <fullName evidence="1">Phosphopentomutase</fullName>
        <ecNumber evidence="1">5.4.2.7</ecNumber>
    </recommendedName>
    <alternativeName>
        <fullName evidence="1">Phosphodeoxyribomutase</fullName>
    </alternativeName>
</protein>
<accession>Q5WH37</accession>
<feature type="chain" id="PRO_0000258273" description="Phosphopentomutase">
    <location>
        <begin position="1"/>
        <end position="394"/>
    </location>
</feature>
<feature type="binding site" evidence="1">
    <location>
        <position position="14"/>
    </location>
    <ligand>
        <name>Mn(2+)</name>
        <dbReference type="ChEBI" id="CHEBI:29035"/>
        <label>1</label>
    </ligand>
</feature>
<feature type="binding site" evidence="1">
    <location>
        <position position="287"/>
    </location>
    <ligand>
        <name>Mn(2+)</name>
        <dbReference type="ChEBI" id="CHEBI:29035"/>
        <label>2</label>
    </ligand>
</feature>
<feature type="binding site" evidence="1">
    <location>
        <position position="292"/>
    </location>
    <ligand>
        <name>Mn(2+)</name>
        <dbReference type="ChEBI" id="CHEBI:29035"/>
        <label>2</label>
    </ligand>
</feature>
<feature type="binding site" evidence="1">
    <location>
        <position position="328"/>
    </location>
    <ligand>
        <name>Mn(2+)</name>
        <dbReference type="ChEBI" id="CHEBI:29035"/>
        <label>1</label>
    </ligand>
</feature>
<feature type="binding site" evidence="1">
    <location>
        <position position="329"/>
    </location>
    <ligand>
        <name>Mn(2+)</name>
        <dbReference type="ChEBI" id="CHEBI:29035"/>
        <label>1</label>
    </ligand>
</feature>
<feature type="binding site" evidence="1">
    <location>
        <position position="340"/>
    </location>
    <ligand>
        <name>Mn(2+)</name>
        <dbReference type="ChEBI" id="CHEBI:29035"/>
        <label>2</label>
    </ligand>
</feature>
<dbReference type="EC" id="5.4.2.7" evidence="1"/>
<dbReference type="EMBL" id="AP006627">
    <property type="protein sequence ID" value="BAD64318.1"/>
    <property type="molecule type" value="Genomic_DNA"/>
</dbReference>
<dbReference type="SMR" id="Q5WH37"/>
<dbReference type="STRING" id="66692.ABC1783"/>
<dbReference type="KEGG" id="bcl:ABC1783"/>
<dbReference type="eggNOG" id="COG1015">
    <property type="taxonomic scope" value="Bacteria"/>
</dbReference>
<dbReference type="HOGENOM" id="CLU_053861_0_0_9"/>
<dbReference type="UniPathway" id="UPA00002">
    <property type="reaction ID" value="UER00467"/>
</dbReference>
<dbReference type="Proteomes" id="UP000001168">
    <property type="component" value="Chromosome"/>
</dbReference>
<dbReference type="GO" id="GO:0005829">
    <property type="term" value="C:cytosol"/>
    <property type="evidence" value="ECO:0007669"/>
    <property type="project" value="TreeGrafter"/>
</dbReference>
<dbReference type="GO" id="GO:0000287">
    <property type="term" value="F:magnesium ion binding"/>
    <property type="evidence" value="ECO:0007669"/>
    <property type="project" value="InterPro"/>
</dbReference>
<dbReference type="GO" id="GO:0030145">
    <property type="term" value="F:manganese ion binding"/>
    <property type="evidence" value="ECO:0007669"/>
    <property type="project" value="UniProtKB-UniRule"/>
</dbReference>
<dbReference type="GO" id="GO:0008973">
    <property type="term" value="F:phosphopentomutase activity"/>
    <property type="evidence" value="ECO:0007669"/>
    <property type="project" value="UniProtKB-UniRule"/>
</dbReference>
<dbReference type="GO" id="GO:0006018">
    <property type="term" value="P:2-deoxyribose 1-phosphate catabolic process"/>
    <property type="evidence" value="ECO:0007669"/>
    <property type="project" value="UniProtKB-UniRule"/>
</dbReference>
<dbReference type="GO" id="GO:0006015">
    <property type="term" value="P:5-phosphoribose 1-diphosphate biosynthetic process"/>
    <property type="evidence" value="ECO:0007669"/>
    <property type="project" value="UniProtKB-UniPathway"/>
</dbReference>
<dbReference type="GO" id="GO:0043094">
    <property type="term" value="P:metabolic compound salvage"/>
    <property type="evidence" value="ECO:0007669"/>
    <property type="project" value="InterPro"/>
</dbReference>
<dbReference type="GO" id="GO:0009117">
    <property type="term" value="P:nucleotide metabolic process"/>
    <property type="evidence" value="ECO:0007669"/>
    <property type="project" value="InterPro"/>
</dbReference>
<dbReference type="CDD" id="cd16009">
    <property type="entry name" value="PPM"/>
    <property type="match status" value="1"/>
</dbReference>
<dbReference type="FunFam" id="3.30.70.1250:FF:000001">
    <property type="entry name" value="Phosphopentomutase"/>
    <property type="match status" value="1"/>
</dbReference>
<dbReference type="Gene3D" id="3.40.720.10">
    <property type="entry name" value="Alkaline Phosphatase, subunit A"/>
    <property type="match status" value="1"/>
</dbReference>
<dbReference type="Gene3D" id="3.30.70.1250">
    <property type="entry name" value="Phosphopentomutase"/>
    <property type="match status" value="1"/>
</dbReference>
<dbReference type="HAMAP" id="MF_00740">
    <property type="entry name" value="Phosphopentomut"/>
    <property type="match status" value="1"/>
</dbReference>
<dbReference type="InterPro" id="IPR017850">
    <property type="entry name" value="Alkaline_phosphatase_core_sf"/>
</dbReference>
<dbReference type="InterPro" id="IPR010045">
    <property type="entry name" value="DeoB"/>
</dbReference>
<dbReference type="InterPro" id="IPR006124">
    <property type="entry name" value="Metalloenzyme"/>
</dbReference>
<dbReference type="InterPro" id="IPR024052">
    <property type="entry name" value="Phosphopentomutase_DeoB_cap_sf"/>
</dbReference>
<dbReference type="NCBIfam" id="TIGR01696">
    <property type="entry name" value="deoB"/>
    <property type="match status" value="1"/>
</dbReference>
<dbReference type="NCBIfam" id="NF003766">
    <property type="entry name" value="PRK05362.1"/>
    <property type="match status" value="1"/>
</dbReference>
<dbReference type="PANTHER" id="PTHR21110">
    <property type="entry name" value="PHOSPHOPENTOMUTASE"/>
    <property type="match status" value="1"/>
</dbReference>
<dbReference type="PANTHER" id="PTHR21110:SF0">
    <property type="entry name" value="PHOSPHOPENTOMUTASE"/>
    <property type="match status" value="1"/>
</dbReference>
<dbReference type="Pfam" id="PF01676">
    <property type="entry name" value="Metalloenzyme"/>
    <property type="match status" value="1"/>
</dbReference>
<dbReference type="PIRSF" id="PIRSF001491">
    <property type="entry name" value="Ppentomutase"/>
    <property type="match status" value="1"/>
</dbReference>
<dbReference type="SUPFAM" id="SSF53649">
    <property type="entry name" value="Alkaline phosphatase-like"/>
    <property type="match status" value="1"/>
</dbReference>
<dbReference type="SUPFAM" id="SSF143856">
    <property type="entry name" value="DeoB insert domain-like"/>
    <property type="match status" value="1"/>
</dbReference>
<proteinExistence type="inferred from homology"/>
<evidence type="ECO:0000255" key="1">
    <source>
        <dbReference type="HAMAP-Rule" id="MF_00740"/>
    </source>
</evidence>